<accession>B0KN22</accession>
<keyword id="KW-0067">ATP-binding</keyword>
<keyword id="KW-0460">Magnesium</keyword>
<keyword id="KW-0464">Manganese</keyword>
<keyword id="KW-0479">Metal-binding</keyword>
<keyword id="KW-0547">Nucleotide-binding</keyword>
<keyword id="KW-0548">Nucleotidyltransferase</keyword>
<keyword id="KW-0808">Transferase</keyword>
<proteinExistence type="inferred from homology"/>
<dbReference type="EC" id="2.7.7.-" evidence="1"/>
<dbReference type="EC" id="2.7.7.108" evidence="1"/>
<dbReference type="EMBL" id="CP000926">
    <property type="protein sequence ID" value="ABZ01003.1"/>
    <property type="molecule type" value="Genomic_DNA"/>
</dbReference>
<dbReference type="RefSeq" id="WP_012274621.1">
    <property type="nucleotide sequence ID" value="NC_010322.1"/>
</dbReference>
<dbReference type="SMR" id="B0KN22"/>
<dbReference type="KEGG" id="ppg:PputGB1_5118"/>
<dbReference type="eggNOG" id="COG0397">
    <property type="taxonomic scope" value="Bacteria"/>
</dbReference>
<dbReference type="HOGENOM" id="CLU_010245_4_0_6"/>
<dbReference type="Proteomes" id="UP000002157">
    <property type="component" value="Chromosome"/>
</dbReference>
<dbReference type="GO" id="GO:0070733">
    <property type="term" value="F:AMPylase activity"/>
    <property type="evidence" value="ECO:0007669"/>
    <property type="project" value="RHEA"/>
</dbReference>
<dbReference type="GO" id="GO:0005524">
    <property type="term" value="F:ATP binding"/>
    <property type="evidence" value="ECO:0007669"/>
    <property type="project" value="UniProtKB-UniRule"/>
</dbReference>
<dbReference type="GO" id="GO:0000287">
    <property type="term" value="F:magnesium ion binding"/>
    <property type="evidence" value="ECO:0007669"/>
    <property type="project" value="UniProtKB-UniRule"/>
</dbReference>
<dbReference type="HAMAP" id="MF_00692">
    <property type="entry name" value="YdiU_SelO"/>
    <property type="match status" value="1"/>
</dbReference>
<dbReference type="InterPro" id="IPR003846">
    <property type="entry name" value="SelO"/>
</dbReference>
<dbReference type="NCBIfam" id="NF000658">
    <property type="entry name" value="PRK00029.1"/>
    <property type="match status" value="1"/>
</dbReference>
<dbReference type="NCBIfam" id="NF045949">
    <property type="entry name" value="PrtAdtaseSelOPseudom"/>
    <property type="match status" value="1"/>
</dbReference>
<dbReference type="PANTHER" id="PTHR32057">
    <property type="entry name" value="PROTEIN ADENYLYLTRANSFERASE SELO, MITOCHONDRIAL"/>
    <property type="match status" value="1"/>
</dbReference>
<dbReference type="PANTHER" id="PTHR32057:SF14">
    <property type="entry name" value="PROTEIN ADENYLYLTRANSFERASE SELO, MITOCHONDRIAL"/>
    <property type="match status" value="1"/>
</dbReference>
<dbReference type="Pfam" id="PF02696">
    <property type="entry name" value="SelO"/>
    <property type="match status" value="1"/>
</dbReference>
<evidence type="ECO:0000255" key="1">
    <source>
        <dbReference type="HAMAP-Rule" id="MF_00692"/>
    </source>
</evidence>
<reference key="1">
    <citation type="submission" date="2008-01" db="EMBL/GenBank/DDBJ databases">
        <title>Complete sequence of Pseudomonas putida GB-1.</title>
        <authorList>
            <consortium name="US DOE Joint Genome Institute"/>
            <person name="Copeland A."/>
            <person name="Lucas S."/>
            <person name="Lapidus A."/>
            <person name="Barry K."/>
            <person name="Glavina del Rio T."/>
            <person name="Dalin E."/>
            <person name="Tice H."/>
            <person name="Pitluck S."/>
            <person name="Bruce D."/>
            <person name="Goodwin L."/>
            <person name="Chertkov O."/>
            <person name="Brettin T."/>
            <person name="Detter J.C."/>
            <person name="Han C."/>
            <person name="Kuske C.R."/>
            <person name="Schmutz J."/>
            <person name="Larimer F."/>
            <person name="Land M."/>
            <person name="Hauser L."/>
            <person name="Kyrpides N."/>
            <person name="Kim E."/>
            <person name="McCarthy J.K."/>
            <person name="Richardson P."/>
        </authorList>
    </citation>
    <scope>NUCLEOTIDE SEQUENCE [LARGE SCALE GENOMIC DNA]</scope>
    <source>
        <strain>GB-1</strain>
    </source>
</reference>
<gene>
    <name evidence="1" type="primary">ydiU</name>
    <name evidence="1" type="synonym">selO</name>
    <name type="ordered locus">PputGB1_5118</name>
</gene>
<sequence>MKALDQLSFDNRFARLGDAFSTQVLPEPIAEPRLVVASESAMALLDLDPAHAELPVFAELFSGHKLWEEADPRAMVYSGHQFGSYNPRLGDGRGLLLAEVLNDAGEHWDLHLKGAGQTPYSRMGDGRAVLRSSIREFLASEALHALGIPTSRALCVIGSSTPVWRETRESAAMLTRLAQSHVRFGHFEYFYYTKQPEQQRVLIDHVLEQHYPECRDAEQPYLAMFRTIVERNAELIARWQAYGFCHGVMNTDNMSILGITFDFGPYAFLDDFDANFICNHSDDRGRYSYANQVPIAHWNLSALAQALTTVIEVEPLKETLGLFLPLYQAHYLDLMRRRLGLTTAEEDDMALVERLLQCMQRGGVDYSLFFRKLGEQPAADALKVVRDDFIDLAAFDAWGADYLARCDREPGNAEGRRERMHAVNPLYVLRNYLAQKAIEAAEAGDYSEVRRLHQVLSHPFEEQPGMQAYAERPPEWGKHLEISCSS</sequence>
<comment type="function">
    <text evidence="1">Nucleotidyltransferase involved in the post-translational modification of proteins. It can catalyze the addition of adenosine monophosphate (AMP) or uridine monophosphate (UMP) to a protein, resulting in modifications known as AMPylation and UMPylation.</text>
</comment>
<comment type="catalytic activity">
    <reaction evidence="1">
        <text>L-seryl-[protein] + ATP = 3-O-(5'-adenylyl)-L-seryl-[protein] + diphosphate</text>
        <dbReference type="Rhea" id="RHEA:58120"/>
        <dbReference type="Rhea" id="RHEA-COMP:9863"/>
        <dbReference type="Rhea" id="RHEA-COMP:15073"/>
        <dbReference type="ChEBI" id="CHEBI:29999"/>
        <dbReference type="ChEBI" id="CHEBI:30616"/>
        <dbReference type="ChEBI" id="CHEBI:33019"/>
        <dbReference type="ChEBI" id="CHEBI:142516"/>
        <dbReference type="EC" id="2.7.7.108"/>
    </reaction>
</comment>
<comment type="catalytic activity">
    <reaction evidence="1">
        <text>L-threonyl-[protein] + ATP = 3-O-(5'-adenylyl)-L-threonyl-[protein] + diphosphate</text>
        <dbReference type="Rhea" id="RHEA:54292"/>
        <dbReference type="Rhea" id="RHEA-COMP:11060"/>
        <dbReference type="Rhea" id="RHEA-COMP:13847"/>
        <dbReference type="ChEBI" id="CHEBI:30013"/>
        <dbReference type="ChEBI" id="CHEBI:30616"/>
        <dbReference type="ChEBI" id="CHEBI:33019"/>
        <dbReference type="ChEBI" id="CHEBI:138113"/>
        <dbReference type="EC" id="2.7.7.108"/>
    </reaction>
</comment>
<comment type="catalytic activity">
    <reaction evidence="1">
        <text>L-tyrosyl-[protein] + ATP = O-(5'-adenylyl)-L-tyrosyl-[protein] + diphosphate</text>
        <dbReference type="Rhea" id="RHEA:54288"/>
        <dbReference type="Rhea" id="RHEA-COMP:10136"/>
        <dbReference type="Rhea" id="RHEA-COMP:13846"/>
        <dbReference type="ChEBI" id="CHEBI:30616"/>
        <dbReference type="ChEBI" id="CHEBI:33019"/>
        <dbReference type="ChEBI" id="CHEBI:46858"/>
        <dbReference type="ChEBI" id="CHEBI:83624"/>
        <dbReference type="EC" id="2.7.7.108"/>
    </reaction>
</comment>
<comment type="catalytic activity">
    <reaction evidence="1">
        <text>L-histidyl-[protein] + UTP = N(tele)-(5'-uridylyl)-L-histidyl-[protein] + diphosphate</text>
        <dbReference type="Rhea" id="RHEA:83891"/>
        <dbReference type="Rhea" id="RHEA-COMP:9745"/>
        <dbReference type="Rhea" id="RHEA-COMP:20239"/>
        <dbReference type="ChEBI" id="CHEBI:29979"/>
        <dbReference type="ChEBI" id="CHEBI:33019"/>
        <dbReference type="ChEBI" id="CHEBI:46398"/>
        <dbReference type="ChEBI" id="CHEBI:233474"/>
    </reaction>
</comment>
<comment type="catalytic activity">
    <reaction evidence="1">
        <text>L-seryl-[protein] + UTP = O-(5'-uridylyl)-L-seryl-[protein] + diphosphate</text>
        <dbReference type="Rhea" id="RHEA:64604"/>
        <dbReference type="Rhea" id="RHEA-COMP:9863"/>
        <dbReference type="Rhea" id="RHEA-COMP:16635"/>
        <dbReference type="ChEBI" id="CHEBI:29999"/>
        <dbReference type="ChEBI" id="CHEBI:33019"/>
        <dbReference type="ChEBI" id="CHEBI:46398"/>
        <dbReference type="ChEBI" id="CHEBI:156051"/>
    </reaction>
</comment>
<comment type="catalytic activity">
    <reaction evidence="1">
        <text>L-tyrosyl-[protein] + UTP = O-(5'-uridylyl)-L-tyrosyl-[protein] + diphosphate</text>
        <dbReference type="Rhea" id="RHEA:83887"/>
        <dbReference type="Rhea" id="RHEA-COMP:10136"/>
        <dbReference type="Rhea" id="RHEA-COMP:20238"/>
        <dbReference type="ChEBI" id="CHEBI:33019"/>
        <dbReference type="ChEBI" id="CHEBI:46398"/>
        <dbReference type="ChEBI" id="CHEBI:46858"/>
        <dbReference type="ChEBI" id="CHEBI:90602"/>
    </reaction>
</comment>
<comment type="cofactor">
    <cofactor evidence="1">
        <name>Mg(2+)</name>
        <dbReference type="ChEBI" id="CHEBI:18420"/>
    </cofactor>
    <cofactor evidence="1">
        <name>Mn(2+)</name>
        <dbReference type="ChEBI" id="CHEBI:29035"/>
    </cofactor>
</comment>
<comment type="similarity">
    <text evidence="1">Belongs to the SELO family.</text>
</comment>
<feature type="chain" id="PRO_1000083134" description="Protein nucleotidyltransferase YdiU">
    <location>
        <begin position="1"/>
        <end position="486"/>
    </location>
</feature>
<feature type="active site" description="Proton acceptor" evidence="1">
    <location>
        <position position="252"/>
    </location>
</feature>
<feature type="binding site" evidence="1">
    <location>
        <position position="90"/>
    </location>
    <ligand>
        <name>ATP</name>
        <dbReference type="ChEBI" id="CHEBI:30616"/>
    </ligand>
</feature>
<feature type="binding site" evidence="1">
    <location>
        <position position="92"/>
    </location>
    <ligand>
        <name>ATP</name>
        <dbReference type="ChEBI" id="CHEBI:30616"/>
    </ligand>
</feature>
<feature type="binding site" evidence="1">
    <location>
        <position position="93"/>
    </location>
    <ligand>
        <name>ATP</name>
        <dbReference type="ChEBI" id="CHEBI:30616"/>
    </ligand>
</feature>
<feature type="binding site" evidence="1">
    <location>
        <position position="113"/>
    </location>
    <ligand>
        <name>ATP</name>
        <dbReference type="ChEBI" id="CHEBI:30616"/>
    </ligand>
</feature>
<feature type="binding site" evidence="1">
    <location>
        <position position="125"/>
    </location>
    <ligand>
        <name>ATP</name>
        <dbReference type="ChEBI" id="CHEBI:30616"/>
    </ligand>
</feature>
<feature type="binding site" evidence="1">
    <location>
        <position position="126"/>
    </location>
    <ligand>
        <name>ATP</name>
        <dbReference type="ChEBI" id="CHEBI:30616"/>
    </ligand>
</feature>
<feature type="binding site" evidence="1">
    <location>
        <position position="176"/>
    </location>
    <ligand>
        <name>ATP</name>
        <dbReference type="ChEBI" id="CHEBI:30616"/>
    </ligand>
</feature>
<feature type="binding site" evidence="1">
    <location>
        <position position="183"/>
    </location>
    <ligand>
        <name>ATP</name>
        <dbReference type="ChEBI" id="CHEBI:30616"/>
    </ligand>
</feature>
<feature type="binding site" evidence="1">
    <location>
        <position position="253"/>
    </location>
    <ligand>
        <name>Mg(2+)</name>
        <dbReference type="ChEBI" id="CHEBI:18420"/>
    </ligand>
</feature>
<feature type="binding site" evidence="1">
    <location>
        <position position="262"/>
    </location>
    <ligand>
        <name>ATP</name>
        <dbReference type="ChEBI" id="CHEBI:30616"/>
    </ligand>
</feature>
<feature type="binding site" evidence="1">
    <location>
        <position position="262"/>
    </location>
    <ligand>
        <name>Mg(2+)</name>
        <dbReference type="ChEBI" id="CHEBI:18420"/>
    </ligand>
</feature>
<organism>
    <name type="scientific">Pseudomonas putida (strain GB-1)</name>
    <dbReference type="NCBI Taxonomy" id="76869"/>
    <lineage>
        <taxon>Bacteria</taxon>
        <taxon>Pseudomonadati</taxon>
        <taxon>Pseudomonadota</taxon>
        <taxon>Gammaproteobacteria</taxon>
        <taxon>Pseudomonadales</taxon>
        <taxon>Pseudomonadaceae</taxon>
        <taxon>Pseudomonas</taxon>
    </lineage>
</organism>
<protein>
    <recommendedName>
        <fullName evidence="1">Protein nucleotidyltransferase YdiU</fullName>
        <ecNumber evidence="1">2.7.7.-</ecNumber>
    </recommendedName>
    <alternativeName>
        <fullName evidence="1">Protein adenylyltransferase YdiU</fullName>
        <ecNumber evidence="1">2.7.7.108</ecNumber>
    </alternativeName>
    <alternativeName>
        <fullName evidence="1">Protein uridylyltransferase YdiU</fullName>
        <ecNumber evidence="1">2.7.7.-</ecNumber>
    </alternativeName>
</protein>
<name>SELO_PSEPG</name>